<evidence type="ECO:0000255" key="1">
    <source>
        <dbReference type="HAMAP-Rule" id="MF_00147"/>
    </source>
</evidence>
<keyword id="KW-0963">Cytoplasm</keyword>
<keyword id="KW-0312">Gluconeogenesis</keyword>
<keyword id="KW-0324">Glycolysis</keyword>
<keyword id="KW-0413">Isomerase</keyword>
<gene>
    <name evidence="1" type="primary">tpiA</name>
    <name type="ordered locus">PSPPH_4195</name>
</gene>
<proteinExistence type="inferred from homology"/>
<feature type="chain" id="PRO_0000307538" description="Triosephosphate isomerase">
    <location>
        <begin position="1"/>
        <end position="251"/>
    </location>
</feature>
<feature type="active site" description="Electrophile" evidence="1">
    <location>
        <position position="95"/>
    </location>
</feature>
<feature type="active site" description="Proton acceptor" evidence="1">
    <location>
        <position position="167"/>
    </location>
</feature>
<feature type="binding site" evidence="1">
    <location>
        <begin position="9"/>
        <end position="11"/>
    </location>
    <ligand>
        <name>substrate</name>
    </ligand>
</feature>
<feature type="binding site" evidence="1">
    <location>
        <position position="173"/>
    </location>
    <ligand>
        <name>substrate</name>
    </ligand>
</feature>
<feature type="binding site" evidence="1">
    <location>
        <position position="212"/>
    </location>
    <ligand>
        <name>substrate</name>
    </ligand>
</feature>
<feature type="binding site" evidence="1">
    <location>
        <begin position="233"/>
        <end position="234"/>
    </location>
    <ligand>
        <name>substrate</name>
    </ligand>
</feature>
<organism>
    <name type="scientific">Pseudomonas savastanoi pv. phaseolicola (strain 1448A / Race 6)</name>
    <name type="common">Pseudomonas syringae pv. phaseolicola (strain 1448A / Race 6)</name>
    <dbReference type="NCBI Taxonomy" id="264730"/>
    <lineage>
        <taxon>Bacteria</taxon>
        <taxon>Pseudomonadati</taxon>
        <taxon>Pseudomonadota</taxon>
        <taxon>Gammaproteobacteria</taxon>
        <taxon>Pseudomonadales</taxon>
        <taxon>Pseudomonadaceae</taxon>
        <taxon>Pseudomonas</taxon>
    </lineage>
</organism>
<reference key="1">
    <citation type="journal article" date="2005" name="J. Bacteriol.">
        <title>Whole-genome sequence analysis of Pseudomonas syringae pv. phaseolicola 1448A reveals divergence among pathovars in genes involved in virulence and transposition.</title>
        <authorList>
            <person name="Joardar V."/>
            <person name="Lindeberg M."/>
            <person name="Jackson R.W."/>
            <person name="Selengut J."/>
            <person name="Dodson R."/>
            <person name="Brinkac L.M."/>
            <person name="Daugherty S.C."/>
            <person name="DeBoy R.T."/>
            <person name="Durkin A.S."/>
            <person name="Gwinn Giglio M."/>
            <person name="Madupu R."/>
            <person name="Nelson W.C."/>
            <person name="Rosovitz M.J."/>
            <person name="Sullivan S.A."/>
            <person name="Crabtree J."/>
            <person name="Creasy T."/>
            <person name="Davidsen T.M."/>
            <person name="Haft D.H."/>
            <person name="Zafar N."/>
            <person name="Zhou L."/>
            <person name="Halpin R."/>
            <person name="Holley T."/>
            <person name="Khouri H.M."/>
            <person name="Feldblyum T.V."/>
            <person name="White O."/>
            <person name="Fraser C.M."/>
            <person name="Chatterjee A.K."/>
            <person name="Cartinhour S."/>
            <person name="Schneider D."/>
            <person name="Mansfield J.W."/>
            <person name="Collmer A."/>
            <person name="Buell R."/>
        </authorList>
    </citation>
    <scope>NUCLEOTIDE SEQUENCE [LARGE SCALE GENOMIC DNA]</scope>
    <source>
        <strain>1448A / Race 6</strain>
    </source>
</reference>
<dbReference type="EC" id="5.3.1.1" evidence="1"/>
<dbReference type="EMBL" id="CP000058">
    <property type="protein sequence ID" value="AAZ37446.1"/>
    <property type="molecule type" value="Genomic_DNA"/>
</dbReference>
<dbReference type="RefSeq" id="WP_011169450.1">
    <property type="nucleotide sequence ID" value="NC_005773.3"/>
</dbReference>
<dbReference type="SMR" id="Q48E73"/>
<dbReference type="KEGG" id="psp:PSPPH_4195"/>
<dbReference type="eggNOG" id="COG0149">
    <property type="taxonomic scope" value="Bacteria"/>
</dbReference>
<dbReference type="HOGENOM" id="CLU_024251_2_1_6"/>
<dbReference type="UniPathway" id="UPA00109">
    <property type="reaction ID" value="UER00189"/>
</dbReference>
<dbReference type="UniPathway" id="UPA00138"/>
<dbReference type="Proteomes" id="UP000000551">
    <property type="component" value="Chromosome"/>
</dbReference>
<dbReference type="GO" id="GO:0005829">
    <property type="term" value="C:cytosol"/>
    <property type="evidence" value="ECO:0007669"/>
    <property type="project" value="TreeGrafter"/>
</dbReference>
<dbReference type="GO" id="GO:0004807">
    <property type="term" value="F:triose-phosphate isomerase activity"/>
    <property type="evidence" value="ECO:0007669"/>
    <property type="project" value="UniProtKB-UniRule"/>
</dbReference>
<dbReference type="GO" id="GO:0006094">
    <property type="term" value="P:gluconeogenesis"/>
    <property type="evidence" value="ECO:0007669"/>
    <property type="project" value="UniProtKB-UniRule"/>
</dbReference>
<dbReference type="GO" id="GO:0046166">
    <property type="term" value="P:glyceraldehyde-3-phosphate biosynthetic process"/>
    <property type="evidence" value="ECO:0007669"/>
    <property type="project" value="TreeGrafter"/>
</dbReference>
<dbReference type="GO" id="GO:0019563">
    <property type="term" value="P:glycerol catabolic process"/>
    <property type="evidence" value="ECO:0007669"/>
    <property type="project" value="TreeGrafter"/>
</dbReference>
<dbReference type="GO" id="GO:0006096">
    <property type="term" value="P:glycolytic process"/>
    <property type="evidence" value="ECO:0007669"/>
    <property type="project" value="UniProtKB-UniRule"/>
</dbReference>
<dbReference type="CDD" id="cd00311">
    <property type="entry name" value="TIM"/>
    <property type="match status" value="1"/>
</dbReference>
<dbReference type="FunFam" id="3.20.20.70:FF:000016">
    <property type="entry name" value="Triosephosphate isomerase"/>
    <property type="match status" value="1"/>
</dbReference>
<dbReference type="Gene3D" id="3.20.20.70">
    <property type="entry name" value="Aldolase class I"/>
    <property type="match status" value="1"/>
</dbReference>
<dbReference type="HAMAP" id="MF_00147_B">
    <property type="entry name" value="TIM_B"/>
    <property type="match status" value="1"/>
</dbReference>
<dbReference type="InterPro" id="IPR013785">
    <property type="entry name" value="Aldolase_TIM"/>
</dbReference>
<dbReference type="InterPro" id="IPR035990">
    <property type="entry name" value="TIM_sf"/>
</dbReference>
<dbReference type="InterPro" id="IPR022896">
    <property type="entry name" value="TrioseP_Isoase_bac/euk"/>
</dbReference>
<dbReference type="InterPro" id="IPR000652">
    <property type="entry name" value="Triosephosphate_isomerase"/>
</dbReference>
<dbReference type="InterPro" id="IPR020861">
    <property type="entry name" value="Triosephosphate_isomerase_AS"/>
</dbReference>
<dbReference type="NCBIfam" id="TIGR00419">
    <property type="entry name" value="tim"/>
    <property type="match status" value="1"/>
</dbReference>
<dbReference type="PANTHER" id="PTHR21139">
    <property type="entry name" value="TRIOSEPHOSPHATE ISOMERASE"/>
    <property type="match status" value="1"/>
</dbReference>
<dbReference type="PANTHER" id="PTHR21139:SF42">
    <property type="entry name" value="TRIOSEPHOSPHATE ISOMERASE"/>
    <property type="match status" value="1"/>
</dbReference>
<dbReference type="Pfam" id="PF00121">
    <property type="entry name" value="TIM"/>
    <property type="match status" value="1"/>
</dbReference>
<dbReference type="SUPFAM" id="SSF51351">
    <property type="entry name" value="Triosephosphate isomerase (TIM)"/>
    <property type="match status" value="1"/>
</dbReference>
<dbReference type="PROSITE" id="PS00171">
    <property type="entry name" value="TIM_1"/>
    <property type="match status" value="1"/>
</dbReference>
<dbReference type="PROSITE" id="PS51440">
    <property type="entry name" value="TIM_2"/>
    <property type="match status" value="1"/>
</dbReference>
<protein>
    <recommendedName>
        <fullName evidence="1">Triosephosphate isomerase</fullName>
        <shortName evidence="1">TIM</shortName>
        <shortName evidence="1">TPI</shortName>
        <ecNumber evidence="1">5.3.1.1</ecNumber>
    </recommendedName>
    <alternativeName>
        <fullName evidence="1">Triose-phosphate isomerase</fullName>
    </alternativeName>
</protein>
<name>TPIS_PSE14</name>
<comment type="function">
    <text evidence="1">Involved in the gluconeogenesis. Catalyzes stereospecifically the conversion of dihydroxyacetone phosphate (DHAP) to D-glyceraldehyde-3-phosphate (G3P).</text>
</comment>
<comment type="catalytic activity">
    <reaction evidence="1">
        <text>D-glyceraldehyde 3-phosphate = dihydroxyacetone phosphate</text>
        <dbReference type="Rhea" id="RHEA:18585"/>
        <dbReference type="ChEBI" id="CHEBI:57642"/>
        <dbReference type="ChEBI" id="CHEBI:59776"/>
        <dbReference type="EC" id="5.3.1.1"/>
    </reaction>
</comment>
<comment type="pathway">
    <text evidence="1">Carbohydrate biosynthesis; gluconeogenesis.</text>
</comment>
<comment type="pathway">
    <text evidence="1">Carbohydrate degradation; glycolysis; D-glyceraldehyde 3-phosphate from glycerone phosphate: step 1/1.</text>
</comment>
<comment type="subunit">
    <text evidence="1">Homodimer.</text>
</comment>
<comment type="subcellular location">
    <subcellularLocation>
        <location evidence="1">Cytoplasm</location>
    </subcellularLocation>
</comment>
<comment type="similarity">
    <text evidence="1">Belongs to the triosephosphate isomerase family.</text>
</comment>
<sequence length="251" mass="26018">MRRPMVAGNWKMHGTRASVAELIEGLGKQVLPGSVDIAVMPASLFTNQVIEGLRATSIIVGAQDAAIQAEQGALTGEIASSQLADAGCKLVLVGHSERRQLIGEQDDVLNKKFAAIQASGLTPVLCIGETLEERKAGQTLEVVGRQLDSVIAEFGVSALINAVIAYEPVWAIGTGLTASPQEAQEVHAAIRAHLAKENAEVAQGVRLLYGGSVKAANAVELFSMPDIDGGLIGGASLNADEFGAICRAAGN</sequence>
<accession>Q48E73</accession>